<accession>P0DXM5</accession>
<accession>Q77PV1</accession>
<accession>Q9WT38</accession>
<reference key="1">
    <citation type="journal article" date="1999" name="J. Virol.">
        <title>Human herpesvirus 6B genome sequence: coding content and comparison with human herpesvirus 6A.</title>
        <authorList>
            <person name="Dominguez G."/>
            <person name="Dambaugh T.R."/>
            <person name="Stamey F.R."/>
            <person name="Dewhurst S."/>
            <person name="Inoue N."/>
            <person name="Pellett P.E."/>
        </authorList>
    </citation>
    <scope>NUCLEOTIDE SEQUENCE [LARGE SCALE GENOMIC DNA]</scope>
</reference>
<organism>
    <name type="scientific">Human herpesvirus 6B (strain Z29)</name>
    <name type="common">HHV-6 variant B</name>
    <name type="synonym">Human B lymphotropic virus</name>
    <dbReference type="NCBI Taxonomy" id="36351"/>
    <lineage>
        <taxon>Viruses</taxon>
        <taxon>Duplodnaviria</taxon>
        <taxon>Heunggongvirae</taxon>
        <taxon>Peploviricota</taxon>
        <taxon>Herviviricetes</taxon>
        <taxon>Herpesvirales</taxon>
        <taxon>Orthoherpesviridae</taxon>
        <taxon>Betaherpesvirinae</taxon>
        <taxon>Roseolovirus</taxon>
        <taxon>Roseolovirus humanbeta6b</taxon>
        <taxon>Human herpesvirus 6B</taxon>
    </lineage>
</organism>
<name>VU26_HHV6Z</name>
<proteinExistence type="predicted"/>
<dbReference type="EMBL" id="AF157706">
    <property type="protein sequence ID" value="AAD49640.1"/>
    <property type="molecule type" value="Genomic_DNA"/>
</dbReference>
<dbReference type="PIR" id="T43986">
    <property type="entry name" value="T43986"/>
</dbReference>
<dbReference type="RefSeq" id="NP_050207.1">
    <property type="nucleotide sequence ID" value="NC_000898.1"/>
</dbReference>
<dbReference type="GeneID" id="1497028"/>
<dbReference type="KEGG" id="vg:1497028"/>
<dbReference type="Proteomes" id="UP000006930">
    <property type="component" value="Segment"/>
</dbReference>
<dbReference type="GO" id="GO:0033644">
    <property type="term" value="C:host cell membrane"/>
    <property type="evidence" value="ECO:0007669"/>
    <property type="project" value="UniProtKB-SubCell"/>
</dbReference>
<dbReference type="GO" id="GO:0016020">
    <property type="term" value="C:membrane"/>
    <property type="evidence" value="ECO:0007669"/>
    <property type="project" value="UniProtKB-KW"/>
</dbReference>
<dbReference type="InterPro" id="IPR009980">
    <property type="entry name" value="Herpes_U26"/>
</dbReference>
<dbReference type="Pfam" id="PF07402">
    <property type="entry name" value="Herpes_U26"/>
    <property type="match status" value="1"/>
</dbReference>
<organismHost>
    <name type="scientific">Homo sapiens</name>
    <name type="common">Human</name>
    <dbReference type="NCBI Taxonomy" id="9606"/>
</organismHost>
<feature type="chain" id="PRO_0000408452" description="Protein U26">
    <location>
        <begin position="1"/>
        <end position="295"/>
    </location>
</feature>
<feature type="transmembrane region" description="Helical" evidence="1">
    <location>
        <begin position="33"/>
        <end position="53"/>
    </location>
</feature>
<feature type="transmembrane region" description="Helical" evidence="1">
    <location>
        <begin position="66"/>
        <end position="86"/>
    </location>
</feature>
<feature type="transmembrane region" description="Helical" evidence="1">
    <location>
        <begin position="103"/>
        <end position="123"/>
    </location>
</feature>
<feature type="transmembrane region" description="Helical" evidence="1">
    <location>
        <begin position="131"/>
        <end position="151"/>
    </location>
</feature>
<feature type="transmembrane region" description="Helical" evidence="1">
    <location>
        <begin position="183"/>
        <end position="203"/>
    </location>
</feature>
<feature type="transmembrane region" description="Helical" evidence="1">
    <location>
        <begin position="218"/>
        <end position="238"/>
    </location>
</feature>
<feature type="transmembrane region" description="Helical" evidence="1">
    <location>
        <begin position="243"/>
        <end position="263"/>
    </location>
</feature>
<feature type="transmembrane region" description="Helical" evidence="1">
    <location>
        <begin position="274"/>
        <end position="294"/>
    </location>
</feature>
<evidence type="ECO:0000255" key="1"/>
<evidence type="ECO:0000305" key="2"/>
<gene>
    <name type="primary">U26</name>
</gene>
<protein>
    <recommendedName>
        <fullName>Protein U26</fullName>
    </recommendedName>
</protein>
<sequence length="295" mass="33585">MRRLTDSFILGLAKGAVIPGLYPFRMTEGRSSLEQIGVVITVAISFLLTFKKFDPRFYKPIGDFKIVFLSLMAAKLPSFLSAVVMICLIFSEMRLRMILSRCVLIMPSYSPAVFTGMMVSLFFKSQMFDDYSVLTTTAFLLPFTLRYGWMIRSSGFLISLQKYRPILKSTSFREVDLKYLVKFTVEFLLLFTILWIGKIFLSMPKSNHLFFLTVVNNVFFKLNVFKAAACAMVAILSGLMMNVCLYRIIFEAFLGLGFSSIMLTLSSDLKDRSFYAGDLLNGFFCLVVCCMYFGV</sequence>
<comment type="subcellular location">
    <subcellularLocation>
        <location evidence="2">Host membrane</location>
        <topology evidence="2">Multi-pass membrane protein</topology>
    </subcellularLocation>
</comment>
<keyword id="KW-1043">Host membrane</keyword>
<keyword id="KW-0472">Membrane</keyword>
<keyword id="KW-1185">Reference proteome</keyword>
<keyword id="KW-0812">Transmembrane</keyword>
<keyword id="KW-1133">Transmembrane helix</keyword>